<reference key="1">
    <citation type="journal article" date="1998" name="DNA Res.">
        <title>Structural analysis of Arabidopsis thaliana chromosome 5. IV. Sequence features of the regions of 1,456,315 bp covered by nineteen physically assigned P1 and TAC clones.</title>
        <authorList>
            <person name="Sato S."/>
            <person name="Kaneko T."/>
            <person name="Kotani H."/>
            <person name="Nakamura Y."/>
            <person name="Asamizu E."/>
            <person name="Miyajima N."/>
            <person name="Tabata S."/>
        </authorList>
    </citation>
    <scope>NUCLEOTIDE SEQUENCE [LARGE SCALE GENOMIC DNA]</scope>
    <source>
        <strain>cv. Columbia</strain>
    </source>
</reference>
<reference key="2">
    <citation type="journal article" date="2017" name="Plant J.">
        <title>Araport11: a complete reannotation of the Arabidopsis thaliana reference genome.</title>
        <authorList>
            <person name="Cheng C.Y."/>
            <person name="Krishnakumar V."/>
            <person name="Chan A.P."/>
            <person name="Thibaud-Nissen F."/>
            <person name="Schobel S."/>
            <person name="Town C.D."/>
        </authorList>
    </citation>
    <scope>GENOME REANNOTATION</scope>
    <source>
        <strain>cv. Columbia</strain>
    </source>
</reference>
<reference key="3">
    <citation type="journal article" date="2003" name="Science">
        <title>Empirical analysis of transcriptional activity in the Arabidopsis genome.</title>
        <authorList>
            <person name="Yamada K."/>
            <person name="Lim J."/>
            <person name="Dale J.M."/>
            <person name="Chen H."/>
            <person name="Shinn P."/>
            <person name="Palm C.J."/>
            <person name="Southwick A.M."/>
            <person name="Wu H.C."/>
            <person name="Kim C.J."/>
            <person name="Nguyen M."/>
            <person name="Pham P.K."/>
            <person name="Cheuk R.F."/>
            <person name="Karlin-Newmann G."/>
            <person name="Liu S.X."/>
            <person name="Lam B."/>
            <person name="Sakano H."/>
            <person name="Wu T."/>
            <person name="Yu G."/>
            <person name="Miranda M."/>
            <person name="Quach H.L."/>
            <person name="Tripp M."/>
            <person name="Chang C.H."/>
            <person name="Lee J.M."/>
            <person name="Toriumi M.J."/>
            <person name="Chan M.M."/>
            <person name="Tang C.C."/>
            <person name="Onodera C.S."/>
            <person name="Deng J.M."/>
            <person name="Akiyama K."/>
            <person name="Ansari Y."/>
            <person name="Arakawa T."/>
            <person name="Banh J."/>
            <person name="Banno F."/>
            <person name="Bowser L."/>
            <person name="Brooks S.Y."/>
            <person name="Carninci P."/>
            <person name="Chao Q."/>
            <person name="Choy N."/>
            <person name="Enju A."/>
            <person name="Goldsmith A.D."/>
            <person name="Gurjal M."/>
            <person name="Hansen N.F."/>
            <person name="Hayashizaki Y."/>
            <person name="Johnson-Hopson C."/>
            <person name="Hsuan V.W."/>
            <person name="Iida K."/>
            <person name="Karnes M."/>
            <person name="Khan S."/>
            <person name="Koesema E."/>
            <person name="Ishida J."/>
            <person name="Jiang P.X."/>
            <person name="Jones T."/>
            <person name="Kawai J."/>
            <person name="Kamiya A."/>
            <person name="Meyers C."/>
            <person name="Nakajima M."/>
            <person name="Narusaka M."/>
            <person name="Seki M."/>
            <person name="Sakurai T."/>
            <person name="Satou M."/>
            <person name="Tamse R."/>
            <person name="Vaysberg M."/>
            <person name="Wallender E.K."/>
            <person name="Wong C."/>
            <person name="Yamamura Y."/>
            <person name="Yuan S."/>
            <person name="Shinozaki K."/>
            <person name="Davis R.W."/>
            <person name="Theologis A."/>
            <person name="Ecker J.R."/>
        </authorList>
    </citation>
    <scope>NUCLEOTIDE SEQUENCE [LARGE SCALE MRNA]</scope>
    <source>
        <strain>cv. Columbia</strain>
    </source>
</reference>
<sequence length="579" mass="65174">MNQMRNGDLGSESFGTCLLLSLPEDVIAVIARFVSPRDICNLSLCCKSLCDVVDSERIWLVQCEVVKVLPLSEIIQWRIGISSYKALCWFLGEVMKPLVGVWVHQNPELGNVVYVMPGFLSVVGCRIIPQEVGPLGIEEARVMWSPVFEIICGFDGSAKFFLHGRDGKVQCCLHPGFVRGIEKSCNVLLLEVETRREKKLCNEIDETVLLVETGVQLPFRKLPFSYRRNLLHIVTSTVGIPVPDLSSEKLFPTSKDDEAVLLERRTMLLKMHKFGGDWNHMNLEDECTNIPNQVDINKSWKHLGFEGDIRNMDAENQTQRKSFSRYFRSGIKHILGRSSSSKNMSSSRSETRPLNLQKFLNFGDSIGLSLKASNIKLSSYQGWPNMDETRYALYKLPIKDPIANDEYAGLWGGTFGWPPGKCTEDKPGKAFFLLMLSYEESQDGTERLLIGTKILEGTHYGMHPNGSAMFVIKIDSPSFEGFPFDTNGEDFEHSYAGEGTAKGYGFRYPGYKPGTLFVTSKGLLMFIWKATKAVLTLQRLNLGELLRKGVCVSPLPPCLNFAYLIKCHTNVFAPERRRS</sequence>
<accession>Q8RWD6</accession>
<accession>Q9FLZ2</accession>
<organism>
    <name type="scientific">Arabidopsis thaliana</name>
    <name type="common">Mouse-ear cress</name>
    <dbReference type="NCBI Taxonomy" id="3702"/>
    <lineage>
        <taxon>Eukaryota</taxon>
        <taxon>Viridiplantae</taxon>
        <taxon>Streptophyta</taxon>
        <taxon>Embryophyta</taxon>
        <taxon>Tracheophyta</taxon>
        <taxon>Spermatophyta</taxon>
        <taxon>Magnoliopsida</taxon>
        <taxon>eudicotyledons</taxon>
        <taxon>Gunneridae</taxon>
        <taxon>Pentapetalae</taxon>
        <taxon>rosids</taxon>
        <taxon>malvids</taxon>
        <taxon>Brassicales</taxon>
        <taxon>Brassicaceae</taxon>
        <taxon>Camelineae</taxon>
        <taxon>Arabidopsis</taxon>
    </lineage>
</organism>
<protein>
    <recommendedName>
        <fullName>F-box protein At5g39450</fullName>
    </recommendedName>
</protein>
<feature type="chain" id="PRO_0000283537" description="F-box protein At5g39450">
    <location>
        <begin position="1"/>
        <end position="579"/>
    </location>
</feature>
<feature type="domain" description="F-box" evidence="1">
    <location>
        <begin position="16"/>
        <end position="62"/>
    </location>
</feature>
<evidence type="ECO:0000255" key="1">
    <source>
        <dbReference type="PROSITE-ProRule" id="PRU00080"/>
    </source>
</evidence>
<evidence type="ECO:0000305" key="2"/>
<gene>
    <name type="ordered locus">At5g39450</name>
    <name type="ORF">MUL8.13</name>
</gene>
<keyword id="KW-1185">Reference proteome</keyword>
<proteinExistence type="evidence at transcript level"/>
<dbReference type="EMBL" id="AB009054">
    <property type="protein sequence ID" value="BAB11018.1"/>
    <property type="status" value="ALT_SEQ"/>
    <property type="molecule type" value="Genomic_DNA"/>
</dbReference>
<dbReference type="EMBL" id="CP002688">
    <property type="protein sequence ID" value="AED94434.1"/>
    <property type="molecule type" value="Genomic_DNA"/>
</dbReference>
<dbReference type="EMBL" id="AY093164">
    <property type="protein sequence ID" value="AAM13163.1"/>
    <property type="molecule type" value="mRNA"/>
</dbReference>
<dbReference type="EMBL" id="BT008911">
    <property type="protein sequence ID" value="AAP68350.1"/>
    <property type="molecule type" value="mRNA"/>
</dbReference>
<dbReference type="RefSeq" id="NP_198761.2">
    <property type="nucleotide sequence ID" value="NM_123307.4"/>
</dbReference>
<dbReference type="FunCoup" id="Q8RWD6">
    <property type="interactions" value="1034"/>
</dbReference>
<dbReference type="IntAct" id="Q8RWD6">
    <property type="interactions" value="1"/>
</dbReference>
<dbReference type="PaxDb" id="3702-AT5G39450.1"/>
<dbReference type="ProteomicsDB" id="222573"/>
<dbReference type="EnsemblPlants" id="AT5G39450.1">
    <property type="protein sequence ID" value="AT5G39450.1"/>
    <property type="gene ID" value="AT5G39450"/>
</dbReference>
<dbReference type="GeneID" id="833941"/>
<dbReference type="Gramene" id="AT5G39450.1">
    <property type="protein sequence ID" value="AT5G39450.1"/>
    <property type="gene ID" value="AT5G39450"/>
</dbReference>
<dbReference type="KEGG" id="ath:AT5G39450"/>
<dbReference type="Araport" id="AT5G39450"/>
<dbReference type="TAIR" id="AT5G39450"/>
<dbReference type="eggNOG" id="ENOG502QTKH">
    <property type="taxonomic scope" value="Eukaryota"/>
</dbReference>
<dbReference type="HOGENOM" id="CLU_033857_0_0_1"/>
<dbReference type="InParanoid" id="Q8RWD6"/>
<dbReference type="OMA" id="KGYGFRY"/>
<dbReference type="OrthoDB" id="441172at2759"/>
<dbReference type="PhylomeDB" id="Q8RWD6"/>
<dbReference type="PRO" id="PR:Q8RWD6"/>
<dbReference type="Proteomes" id="UP000006548">
    <property type="component" value="Chromosome 5"/>
</dbReference>
<dbReference type="ExpressionAtlas" id="Q8RWD6">
    <property type="expression patterns" value="baseline and differential"/>
</dbReference>
<dbReference type="Gene3D" id="1.20.1280.50">
    <property type="match status" value="1"/>
</dbReference>
<dbReference type="InterPro" id="IPR040275">
    <property type="entry name" value="At5g39450-like"/>
</dbReference>
<dbReference type="InterPro" id="IPR036047">
    <property type="entry name" value="F-box-like_dom_sf"/>
</dbReference>
<dbReference type="InterPro" id="IPR001810">
    <property type="entry name" value="F-box_dom"/>
</dbReference>
<dbReference type="PANTHER" id="PTHR31370">
    <property type="entry name" value="F-BOX PROTEIN FAMILY-LIKE"/>
    <property type="match status" value="1"/>
</dbReference>
<dbReference type="PANTHER" id="PTHR31370:SF2">
    <property type="entry name" value="OS08G0105100 PROTEIN"/>
    <property type="match status" value="1"/>
</dbReference>
<dbReference type="Pfam" id="PF00646">
    <property type="entry name" value="F-box"/>
    <property type="match status" value="1"/>
</dbReference>
<dbReference type="SMART" id="SM00256">
    <property type="entry name" value="FBOX"/>
    <property type="match status" value="1"/>
</dbReference>
<dbReference type="SUPFAM" id="SSF81383">
    <property type="entry name" value="F-box domain"/>
    <property type="match status" value="1"/>
</dbReference>
<dbReference type="PROSITE" id="PS50181">
    <property type="entry name" value="FBOX"/>
    <property type="match status" value="1"/>
</dbReference>
<name>FB271_ARATH</name>
<comment type="sequence caution" evidence="2">
    <conflict type="erroneous gene model prediction">
        <sequence resource="EMBL-CDS" id="BAB11018"/>
    </conflict>
</comment>